<dbReference type="EC" id="3.1.-.-" evidence="1"/>
<dbReference type="EMBL" id="CP000469">
    <property type="protein sequence ID" value="ABK47701.1"/>
    <property type="molecule type" value="Genomic_DNA"/>
</dbReference>
<dbReference type="RefSeq" id="WP_011716524.1">
    <property type="nucleotide sequence ID" value="NC_008577.1"/>
</dbReference>
<dbReference type="SMR" id="A0KV82"/>
<dbReference type="STRING" id="94122.Shewana3_1467"/>
<dbReference type="KEGG" id="shn:Shewana3_1467"/>
<dbReference type="eggNOG" id="COG2840">
    <property type="taxonomic scope" value="Bacteria"/>
</dbReference>
<dbReference type="HOGENOM" id="CLU_055978_4_0_6"/>
<dbReference type="OrthoDB" id="5795446at2"/>
<dbReference type="Proteomes" id="UP000002589">
    <property type="component" value="Chromosome"/>
</dbReference>
<dbReference type="GO" id="GO:0004521">
    <property type="term" value="F:RNA endonuclease activity"/>
    <property type="evidence" value="ECO:0007669"/>
    <property type="project" value="UniProtKB-UniRule"/>
</dbReference>
<dbReference type="GO" id="GO:0019843">
    <property type="term" value="F:rRNA binding"/>
    <property type="evidence" value="ECO:0007669"/>
    <property type="project" value="UniProtKB-UniRule"/>
</dbReference>
<dbReference type="GO" id="GO:0072344">
    <property type="term" value="P:rescue of stalled ribosome"/>
    <property type="evidence" value="ECO:0007669"/>
    <property type="project" value="UniProtKB-UniRule"/>
</dbReference>
<dbReference type="Gene3D" id="3.30.1370.110">
    <property type="match status" value="1"/>
</dbReference>
<dbReference type="HAMAP" id="MF_01042">
    <property type="entry name" value="SmrB"/>
    <property type="match status" value="1"/>
</dbReference>
<dbReference type="InterPro" id="IPR002625">
    <property type="entry name" value="Smr_dom"/>
</dbReference>
<dbReference type="InterPro" id="IPR036063">
    <property type="entry name" value="Smr_dom_sf"/>
</dbReference>
<dbReference type="InterPro" id="IPR022990">
    <property type="entry name" value="SmrB-like"/>
</dbReference>
<dbReference type="NCBIfam" id="NF003432">
    <property type="entry name" value="PRK04946.1"/>
    <property type="match status" value="1"/>
</dbReference>
<dbReference type="PANTHER" id="PTHR35562">
    <property type="entry name" value="DNA ENDONUCLEASE SMRA-RELATED"/>
    <property type="match status" value="1"/>
</dbReference>
<dbReference type="PANTHER" id="PTHR35562:SF1">
    <property type="entry name" value="UPF0115 PROTEIN YFCN"/>
    <property type="match status" value="1"/>
</dbReference>
<dbReference type="Pfam" id="PF01713">
    <property type="entry name" value="Smr"/>
    <property type="match status" value="1"/>
</dbReference>
<dbReference type="SMART" id="SM00463">
    <property type="entry name" value="SMR"/>
    <property type="match status" value="1"/>
</dbReference>
<dbReference type="SUPFAM" id="SSF160443">
    <property type="entry name" value="SMR domain-like"/>
    <property type="match status" value="1"/>
</dbReference>
<dbReference type="PROSITE" id="PS50828">
    <property type="entry name" value="SMR"/>
    <property type="match status" value="1"/>
</dbReference>
<proteinExistence type="inferred from homology"/>
<sequence length="176" mass="20158">MNKNDDKEGMAMFSALIEGIKPIAQDKRHFRTPLKTKQEIELKEQQLHADSYFSDTYQPLLPVQGPMRWLDEGVDSLELKRLRRGDYQPDLLLDLHGYRQSEAKLELAALIQACVKQQSQCCCVMHGYGTGILKQQVPMWLVQHPKVKAFHQAPKEWGGDAALLVLIDIGDQPHRR</sequence>
<accession>A0KV82</accession>
<name>SMRB_SHESA</name>
<reference key="1">
    <citation type="submission" date="2006-09" db="EMBL/GenBank/DDBJ databases">
        <title>Complete sequence of chromosome 1 of Shewanella sp. ANA-3.</title>
        <authorList>
            <person name="Copeland A."/>
            <person name="Lucas S."/>
            <person name="Lapidus A."/>
            <person name="Barry K."/>
            <person name="Detter J.C."/>
            <person name="Glavina del Rio T."/>
            <person name="Hammon N."/>
            <person name="Israni S."/>
            <person name="Dalin E."/>
            <person name="Tice H."/>
            <person name="Pitluck S."/>
            <person name="Chertkov O."/>
            <person name="Brettin T."/>
            <person name="Bruce D."/>
            <person name="Han C."/>
            <person name="Tapia R."/>
            <person name="Gilna P."/>
            <person name="Schmutz J."/>
            <person name="Larimer F."/>
            <person name="Land M."/>
            <person name="Hauser L."/>
            <person name="Kyrpides N."/>
            <person name="Kim E."/>
            <person name="Newman D."/>
            <person name="Salticov C."/>
            <person name="Konstantinidis K."/>
            <person name="Klappenback J."/>
            <person name="Tiedje J."/>
            <person name="Richardson P."/>
        </authorList>
    </citation>
    <scope>NUCLEOTIDE SEQUENCE [LARGE SCALE GENOMIC DNA]</scope>
    <source>
        <strain>ANA-3</strain>
    </source>
</reference>
<evidence type="ECO:0000255" key="1">
    <source>
        <dbReference type="HAMAP-Rule" id="MF_01042"/>
    </source>
</evidence>
<feature type="chain" id="PRO_1000084362" description="Ribosome rescue factor SmrB">
    <location>
        <begin position="1"/>
        <end position="176"/>
    </location>
</feature>
<feature type="domain" description="Smr" evidence="1">
    <location>
        <begin position="93"/>
        <end position="168"/>
    </location>
</feature>
<comment type="function">
    <text evidence="1">Acts as a ribosome collision sensor. Detects stalled/collided disomes (pairs of ribosomes where the leading ribosome is stalled and a second ribosome has collided with it) and endonucleolytically cleaves mRNA at the 5' boundary of the stalled ribosome. Stalled/collided disomes form a new interface (primarily via the 30S subunits) that binds SmrB. Cleaved mRNA becomes available for tmRNA ligation, leading to ribosomal subunit dissociation and rescue of stalled ribosomes.</text>
</comment>
<comment type="subunit">
    <text evidence="1">Associates with collided ribosomes, but not with correctly translating polysomes.</text>
</comment>
<comment type="similarity">
    <text evidence="1">Belongs to the SmrB family.</text>
</comment>
<gene>
    <name evidence="1" type="primary">smrB</name>
    <name type="ordered locus">Shewana3_1467</name>
</gene>
<protein>
    <recommendedName>
        <fullName evidence="1">Ribosome rescue factor SmrB</fullName>
        <ecNumber evidence="1">3.1.-.-</ecNumber>
    </recommendedName>
</protein>
<keyword id="KW-0255">Endonuclease</keyword>
<keyword id="KW-0378">Hydrolase</keyword>
<keyword id="KW-0540">Nuclease</keyword>
<keyword id="KW-0694">RNA-binding</keyword>
<keyword id="KW-0699">rRNA-binding</keyword>
<organism>
    <name type="scientific">Shewanella sp. (strain ANA-3)</name>
    <dbReference type="NCBI Taxonomy" id="94122"/>
    <lineage>
        <taxon>Bacteria</taxon>
        <taxon>Pseudomonadati</taxon>
        <taxon>Pseudomonadota</taxon>
        <taxon>Gammaproteobacteria</taxon>
        <taxon>Alteromonadales</taxon>
        <taxon>Shewanellaceae</taxon>
        <taxon>Shewanella</taxon>
    </lineage>
</organism>